<protein>
    <recommendedName>
        <fullName>Uncharacterized protein APE_1986.1</fullName>
    </recommendedName>
</protein>
<sequence length="172" mass="19780">MRALIFGRFQPFHKGHLSIVKWAFERGYSELVFLVGMASENYTPRNPFTAGERIEMIRLSFLDAGLPLEKAITATIRTLETSIGSVYYVLSYVPRVDTILTRNPVIAKIFLDAGVNVERPPLFNRDEWRGEKIRMWIARGDDRWRSTVTPSTARFIEEIGGVERIRWSLASD</sequence>
<comment type="similarity">
    <text evidence="1">Belongs to the archaeal NMN adenylyltransferase family.</text>
</comment>
<name>Y1986_AERPE</name>
<accession>Q9YAF3</accession>
<evidence type="ECO:0000305" key="1"/>
<reference key="1">
    <citation type="journal article" date="1999" name="DNA Res.">
        <title>Complete genome sequence of an aerobic hyper-thermophilic crenarchaeon, Aeropyrum pernix K1.</title>
        <authorList>
            <person name="Kawarabayasi Y."/>
            <person name="Hino Y."/>
            <person name="Horikawa H."/>
            <person name="Yamazaki S."/>
            <person name="Haikawa Y."/>
            <person name="Jin-no K."/>
            <person name="Takahashi M."/>
            <person name="Sekine M."/>
            <person name="Baba S."/>
            <person name="Ankai A."/>
            <person name="Kosugi H."/>
            <person name="Hosoyama A."/>
            <person name="Fukui S."/>
            <person name="Nagai Y."/>
            <person name="Nishijima K."/>
            <person name="Nakazawa H."/>
            <person name="Takamiya M."/>
            <person name="Masuda S."/>
            <person name="Funahashi T."/>
            <person name="Tanaka T."/>
            <person name="Kudoh Y."/>
            <person name="Yamazaki J."/>
            <person name="Kushida N."/>
            <person name="Oguchi A."/>
            <person name="Aoki K."/>
            <person name="Kubota K."/>
            <person name="Nakamura Y."/>
            <person name="Nomura N."/>
            <person name="Sako Y."/>
            <person name="Kikuchi H."/>
        </authorList>
    </citation>
    <scope>NUCLEOTIDE SEQUENCE [LARGE SCALE GENOMIC DNA]</scope>
    <source>
        <strain>ATCC 700893 / DSM 11879 / JCM 9820 / NBRC 100138 / K1</strain>
    </source>
</reference>
<organism>
    <name type="scientific">Aeropyrum pernix (strain ATCC 700893 / DSM 11879 / JCM 9820 / NBRC 100138 / K1)</name>
    <dbReference type="NCBI Taxonomy" id="272557"/>
    <lineage>
        <taxon>Archaea</taxon>
        <taxon>Thermoproteota</taxon>
        <taxon>Thermoprotei</taxon>
        <taxon>Desulfurococcales</taxon>
        <taxon>Desulfurococcaceae</taxon>
        <taxon>Aeropyrum</taxon>
    </lineage>
</organism>
<gene>
    <name type="ordered locus">APE_1986.1</name>
</gene>
<keyword id="KW-0548">Nucleotidyltransferase</keyword>
<keyword id="KW-1185">Reference proteome</keyword>
<keyword id="KW-0808">Transferase</keyword>
<feature type="chain" id="PRO_0000135009" description="Uncharacterized protein APE_1986.1">
    <location>
        <begin position="1"/>
        <end position="172"/>
    </location>
</feature>
<proteinExistence type="inferred from homology"/>
<dbReference type="EMBL" id="BA000002">
    <property type="protein sequence ID" value="BAA80996.2"/>
    <property type="molecule type" value="Genomic_DNA"/>
</dbReference>
<dbReference type="PIR" id="D72501">
    <property type="entry name" value="D72501"/>
</dbReference>
<dbReference type="SMR" id="Q9YAF3"/>
<dbReference type="STRING" id="272557.APE_1986.1"/>
<dbReference type="EnsemblBacteria" id="BAA80996">
    <property type="protein sequence ID" value="BAA80996"/>
    <property type="gene ID" value="APE_1986.1"/>
</dbReference>
<dbReference type="KEGG" id="ape:APE_1986.1"/>
<dbReference type="PATRIC" id="fig|272557.25.peg.1326"/>
<dbReference type="eggNOG" id="arCOG00972">
    <property type="taxonomic scope" value="Archaea"/>
</dbReference>
<dbReference type="Proteomes" id="UP000002518">
    <property type="component" value="Chromosome"/>
</dbReference>
<dbReference type="GO" id="GO:0005737">
    <property type="term" value="C:cytoplasm"/>
    <property type="evidence" value="ECO:0007669"/>
    <property type="project" value="UniProtKB-UniRule"/>
</dbReference>
<dbReference type="GO" id="GO:0000309">
    <property type="term" value="F:nicotinamide-nucleotide adenylyltransferase activity"/>
    <property type="evidence" value="ECO:0007669"/>
    <property type="project" value="UniProtKB-UniRule"/>
</dbReference>
<dbReference type="GO" id="GO:0009435">
    <property type="term" value="P:NAD biosynthetic process"/>
    <property type="evidence" value="ECO:0007669"/>
    <property type="project" value="UniProtKB-UniRule"/>
</dbReference>
<dbReference type="Gene3D" id="3.40.50.620">
    <property type="entry name" value="HUPs"/>
    <property type="match status" value="1"/>
</dbReference>
<dbReference type="HAMAP" id="MF_00243">
    <property type="entry name" value="NMN_adenylyltr"/>
    <property type="match status" value="1"/>
</dbReference>
<dbReference type="InterPro" id="IPR004821">
    <property type="entry name" value="Cyt_trans-like"/>
</dbReference>
<dbReference type="InterPro" id="IPR006418">
    <property type="entry name" value="NMN_Atrans_arc"/>
</dbReference>
<dbReference type="InterPro" id="IPR014729">
    <property type="entry name" value="Rossmann-like_a/b/a_fold"/>
</dbReference>
<dbReference type="NCBIfam" id="TIGR00125">
    <property type="entry name" value="cyt_tran_rel"/>
    <property type="match status" value="1"/>
</dbReference>
<dbReference type="NCBIfam" id="NF002243">
    <property type="entry name" value="PRK01153.1"/>
    <property type="match status" value="1"/>
</dbReference>
<dbReference type="PANTHER" id="PTHR21342:SF0">
    <property type="entry name" value="BIFUNCTIONAL NMN ADENYLYLTRANSFERASE_NUDIX HYDROLASE"/>
    <property type="match status" value="1"/>
</dbReference>
<dbReference type="PANTHER" id="PTHR21342">
    <property type="entry name" value="PHOSPHOPANTETHEINE ADENYLYLTRANSFERASE"/>
    <property type="match status" value="1"/>
</dbReference>
<dbReference type="Pfam" id="PF01467">
    <property type="entry name" value="CTP_transf_like"/>
    <property type="match status" value="1"/>
</dbReference>
<dbReference type="SUPFAM" id="SSF52374">
    <property type="entry name" value="Nucleotidylyl transferase"/>
    <property type="match status" value="1"/>
</dbReference>